<evidence type="ECO:0000250" key="1">
    <source>
        <dbReference type="UniProtKB" id="P03891"/>
    </source>
</evidence>
<evidence type="ECO:0000250" key="2">
    <source>
        <dbReference type="UniProtKB" id="P03892"/>
    </source>
</evidence>
<evidence type="ECO:0000255" key="3"/>
<evidence type="ECO:0000305" key="4"/>
<sequence length="347" mass="39093">MNPLALSLILTTLLAGTLITMMSSHWLTAWMGLEMNMLTMIPILMKTTNPRSTEAATKYFMTQAMASMMLMMALTINLMYSGQWSITKMTNPVASNMALMALMTKLGSAPFHFWVPEVTQGVELTPGMILLTWQKLAPLSLLYQMATYTNTNLIYLSGLLSILIGGWGGLNQTQLRKILAYSSISHMGWMLIILPFNPTLTLLNLTIYIMLTLSIFMILTNTFTTSMSSLTLMWNKTPAMTIMLMTTLLSLGGLPPLSGFMPKWLMIHELTKNNSIIMPLTMAIMALLNMYFYMRLIYYSSLTILPSTNNMKMTWRFTNTKHTMTLPTLITLSNMLLPLTPMISMLE</sequence>
<keyword id="KW-0249">Electron transport</keyword>
<keyword id="KW-0472">Membrane</keyword>
<keyword id="KW-0496">Mitochondrion</keyword>
<keyword id="KW-0999">Mitochondrion inner membrane</keyword>
<keyword id="KW-0520">NAD</keyword>
<keyword id="KW-1185">Reference proteome</keyword>
<keyword id="KW-0679">Respiratory chain</keyword>
<keyword id="KW-1278">Translocase</keyword>
<keyword id="KW-0812">Transmembrane</keyword>
<keyword id="KW-1133">Transmembrane helix</keyword>
<keyword id="KW-0813">Transport</keyword>
<keyword id="KW-0830">Ubiquinone</keyword>
<comment type="function">
    <text evidence="1">Core subunit of the mitochondrial membrane respiratory chain NADH dehydrogenase (Complex I) which catalyzes electron transfer from NADH through the respiratory chain, using ubiquinone as an electron acceptor. Essential for the catalytic activity and assembly of complex I.</text>
</comment>
<comment type="catalytic activity">
    <reaction evidence="1">
        <text>a ubiquinone + NADH + 5 H(+)(in) = a ubiquinol + NAD(+) + 4 H(+)(out)</text>
        <dbReference type="Rhea" id="RHEA:29091"/>
        <dbReference type="Rhea" id="RHEA-COMP:9565"/>
        <dbReference type="Rhea" id="RHEA-COMP:9566"/>
        <dbReference type="ChEBI" id="CHEBI:15378"/>
        <dbReference type="ChEBI" id="CHEBI:16389"/>
        <dbReference type="ChEBI" id="CHEBI:17976"/>
        <dbReference type="ChEBI" id="CHEBI:57540"/>
        <dbReference type="ChEBI" id="CHEBI:57945"/>
        <dbReference type="EC" id="7.1.1.2"/>
    </reaction>
</comment>
<comment type="subunit">
    <text evidence="1 2">Core subunit of respiratory chain NADH dehydrogenase (Complex I) which is composed of 45 different subunits. Interacts with TMEM242 (By similarity).</text>
</comment>
<comment type="subcellular location">
    <subcellularLocation>
        <location evidence="2">Mitochondrion inner membrane</location>
        <topology evidence="3">Multi-pass membrane protein</topology>
    </subcellularLocation>
</comment>
<comment type="similarity">
    <text evidence="4">Belongs to the complex I subunit 2 family.</text>
</comment>
<accession>Q9TA28</accession>
<accession>Q2I3G0</accession>
<organism>
    <name type="scientific">Loxodonta africana</name>
    <name type="common">African elephant</name>
    <dbReference type="NCBI Taxonomy" id="9785"/>
    <lineage>
        <taxon>Eukaryota</taxon>
        <taxon>Metazoa</taxon>
        <taxon>Chordata</taxon>
        <taxon>Craniata</taxon>
        <taxon>Vertebrata</taxon>
        <taxon>Euteleostomi</taxon>
        <taxon>Mammalia</taxon>
        <taxon>Eutheria</taxon>
        <taxon>Afrotheria</taxon>
        <taxon>Proboscidea</taxon>
        <taxon>Elephantidae</taxon>
        <taxon>Loxodonta</taxon>
    </lineage>
</organism>
<protein>
    <recommendedName>
        <fullName evidence="1">NADH-ubiquinone oxidoreductase chain 2</fullName>
        <ecNumber evidence="1">7.1.1.2</ecNumber>
    </recommendedName>
    <alternativeName>
        <fullName>NADH dehydrogenase subunit 2</fullName>
    </alternativeName>
</protein>
<reference key="1">
    <citation type="journal article" date="2000" name="Zoology">
        <title>The complete mitochondrial genome sequence of the African elephant (Loxodonta africana), phylogenetic relationships of Proboscidea to other mammals and D-loop heteroplasmy.</title>
        <authorList>
            <person name="Hauf J."/>
            <person name="Waddell P.J."/>
            <person name="Chalwatzis N."/>
            <person name="Joger U."/>
            <person name="Zimmermann F.K."/>
        </authorList>
    </citation>
    <scope>NUCLEOTIDE SEQUENCE [GENOMIC DNA]</scope>
    <source>
        <tissue>Blood</tissue>
    </source>
</reference>
<reference key="2">
    <citation type="journal article" date="2006" name="PLoS Biol.">
        <title>Complete mitochondrial genome and phylogeny of Pleistocene mammoth Mammuthus primigenius.</title>
        <authorList>
            <person name="Rogaev E.I."/>
            <person name="Moliaka Y.K."/>
            <person name="Malyarchuk B.A."/>
            <person name="Kondrashov F.A."/>
            <person name="Derenko M.V."/>
            <person name="Chumakov I."/>
            <person name="Grigorenko A.P."/>
        </authorList>
    </citation>
    <scope>NUCLEOTIDE SEQUENCE [GENOMIC DNA]</scope>
    <source>
        <tissue>Blood</tissue>
    </source>
</reference>
<feature type="chain" id="PRO_0000117602" description="NADH-ubiquinone oxidoreductase chain 2">
    <location>
        <begin position="1"/>
        <end position="347"/>
    </location>
</feature>
<feature type="transmembrane region" description="Helical" evidence="3">
    <location>
        <begin position="3"/>
        <end position="23"/>
    </location>
</feature>
<feature type="transmembrane region" description="Helical" evidence="3">
    <location>
        <begin position="59"/>
        <end position="79"/>
    </location>
</feature>
<feature type="transmembrane region" description="Helical" evidence="3">
    <location>
        <begin position="93"/>
        <end position="115"/>
    </location>
</feature>
<feature type="transmembrane region" description="Helical" evidence="3">
    <location>
        <begin position="150"/>
        <end position="170"/>
    </location>
</feature>
<feature type="transmembrane region" description="Helical" evidence="3">
    <location>
        <begin position="178"/>
        <end position="198"/>
    </location>
</feature>
<feature type="transmembrane region" description="Helical" evidence="3">
    <location>
        <begin position="199"/>
        <end position="219"/>
    </location>
</feature>
<feature type="transmembrane region" description="Helical" evidence="3">
    <location>
        <begin position="242"/>
        <end position="262"/>
    </location>
</feature>
<feature type="transmembrane region" description="Helical" evidence="3">
    <location>
        <begin position="274"/>
        <end position="294"/>
    </location>
</feature>
<feature type="transmembrane region" description="Helical" evidence="3">
    <location>
        <begin position="326"/>
        <end position="346"/>
    </location>
</feature>
<name>NU2M_LOXAF</name>
<geneLocation type="mitochondrion"/>
<proteinExistence type="inferred from homology"/>
<dbReference type="EC" id="7.1.1.2" evidence="1"/>
<dbReference type="EMBL" id="AJ224821">
    <property type="protein sequence ID" value="CAA12139.1"/>
    <property type="molecule type" value="Genomic_DNA"/>
</dbReference>
<dbReference type="EMBL" id="DQ316069">
    <property type="protein sequence ID" value="ABC17905.1"/>
    <property type="molecule type" value="Genomic_DNA"/>
</dbReference>
<dbReference type="PIR" id="T45551">
    <property type="entry name" value="T45551"/>
</dbReference>
<dbReference type="RefSeq" id="NP_009280.1">
    <property type="nucleotide sequence ID" value="NC_000934.1"/>
</dbReference>
<dbReference type="SMR" id="Q9TA28"/>
<dbReference type="FunCoup" id="Q9TA28">
    <property type="interactions" value="53"/>
</dbReference>
<dbReference type="STRING" id="9785.ENSLAFP00000029492"/>
<dbReference type="Ensembl" id="ENSLAFT00000038044.1">
    <property type="protein sequence ID" value="ENSLAFP00000029492.1"/>
    <property type="gene ID" value="ENSLAFG00000033278.1"/>
</dbReference>
<dbReference type="GeneID" id="808792"/>
<dbReference type="KEGG" id="lav:808792"/>
<dbReference type="CTD" id="4536"/>
<dbReference type="eggNOG" id="KOG4668">
    <property type="taxonomic scope" value="Eukaryota"/>
</dbReference>
<dbReference type="GeneTree" id="ENSGT00730000111348"/>
<dbReference type="HOGENOM" id="CLU_007100_1_3_1"/>
<dbReference type="InParanoid" id="Q9TA28"/>
<dbReference type="OMA" id="HFWVPEV"/>
<dbReference type="OrthoDB" id="4092844at2759"/>
<dbReference type="TreeFam" id="TF343996"/>
<dbReference type="Proteomes" id="UP000007646">
    <property type="component" value="Unassembled WGS sequence"/>
</dbReference>
<dbReference type="GO" id="GO:0005743">
    <property type="term" value="C:mitochondrial inner membrane"/>
    <property type="evidence" value="ECO:0000250"/>
    <property type="project" value="UniProtKB"/>
</dbReference>
<dbReference type="GO" id="GO:0045271">
    <property type="term" value="C:respiratory chain complex I"/>
    <property type="evidence" value="ECO:0007669"/>
    <property type="project" value="Ensembl"/>
</dbReference>
<dbReference type="GO" id="GO:0008137">
    <property type="term" value="F:NADH dehydrogenase (ubiquinone) activity"/>
    <property type="evidence" value="ECO:0000250"/>
    <property type="project" value="UniProtKB"/>
</dbReference>
<dbReference type="GO" id="GO:0006120">
    <property type="term" value="P:mitochondrial electron transport, NADH to ubiquinone"/>
    <property type="evidence" value="ECO:0000250"/>
    <property type="project" value="UniProtKB"/>
</dbReference>
<dbReference type="GO" id="GO:0032981">
    <property type="term" value="P:mitochondrial respiratory chain complex I assembly"/>
    <property type="evidence" value="ECO:0000250"/>
    <property type="project" value="UniProtKB"/>
</dbReference>
<dbReference type="GO" id="GO:0072593">
    <property type="term" value="P:reactive oxygen species metabolic process"/>
    <property type="evidence" value="ECO:0007669"/>
    <property type="project" value="Ensembl"/>
</dbReference>
<dbReference type="InterPro" id="IPR050175">
    <property type="entry name" value="Complex_I_Subunit_2"/>
</dbReference>
<dbReference type="InterPro" id="IPR010933">
    <property type="entry name" value="NADH_DH_su2_C"/>
</dbReference>
<dbReference type="InterPro" id="IPR003917">
    <property type="entry name" value="NADH_UbQ_OxRdtase_chain2"/>
</dbReference>
<dbReference type="InterPro" id="IPR001750">
    <property type="entry name" value="ND/Mrp_TM"/>
</dbReference>
<dbReference type="PANTHER" id="PTHR46552">
    <property type="entry name" value="NADH-UBIQUINONE OXIDOREDUCTASE CHAIN 2"/>
    <property type="match status" value="1"/>
</dbReference>
<dbReference type="PANTHER" id="PTHR46552:SF1">
    <property type="entry name" value="NADH-UBIQUINONE OXIDOREDUCTASE CHAIN 2"/>
    <property type="match status" value="1"/>
</dbReference>
<dbReference type="Pfam" id="PF06444">
    <property type="entry name" value="NADH_dehy_S2_C"/>
    <property type="match status" value="1"/>
</dbReference>
<dbReference type="Pfam" id="PF00361">
    <property type="entry name" value="Proton_antipo_M"/>
    <property type="match status" value="1"/>
</dbReference>
<dbReference type="PRINTS" id="PR01436">
    <property type="entry name" value="NADHDHGNASE2"/>
</dbReference>
<gene>
    <name evidence="1" type="primary">MT-ND2</name>
    <name type="synonym">MTND2</name>
    <name type="synonym">NADH2</name>
    <name type="synonym">ND2</name>
</gene>